<accession>A6QLJ3</accession>
<dbReference type="EC" id="3.6.5.-"/>
<dbReference type="EMBL" id="BC147985">
    <property type="protein sequence ID" value="AAI47986.1"/>
    <property type="molecule type" value="mRNA"/>
</dbReference>
<dbReference type="RefSeq" id="NP_001095537.1">
    <property type="nucleotide sequence ID" value="NM_001102067.1"/>
</dbReference>
<dbReference type="SMR" id="A6QLJ3"/>
<dbReference type="FunCoup" id="A6QLJ3">
    <property type="interactions" value="2005"/>
</dbReference>
<dbReference type="STRING" id="9913.ENSBTAP00000000356"/>
<dbReference type="PaxDb" id="9913-ENSBTAP00000000356"/>
<dbReference type="GeneID" id="522459"/>
<dbReference type="KEGG" id="bta:522459"/>
<dbReference type="CTD" id="60558"/>
<dbReference type="eggNOG" id="KOG0462">
    <property type="taxonomic scope" value="Eukaryota"/>
</dbReference>
<dbReference type="HOGENOM" id="CLU_009995_3_3_1"/>
<dbReference type="InParanoid" id="A6QLJ3"/>
<dbReference type="OrthoDB" id="1074at2759"/>
<dbReference type="TreeFam" id="TF314751"/>
<dbReference type="Proteomes" id="UP000009136">
    <property type="component" value="Unplaced"/>
</dbReference>
<dbReference type="GO" id="GO:0005743">
    <property type="term" value="C:mitochondrial inner membrane"/>
    <property type="evidence" value="ECO:0007669"/>
    <property type="project" value="UniProtKB-SubCell"/>
</dbReference>
<dbReference type="GO" id="GO:0005759">
    <property type="term" value="C:mitochondrial matrix"/>
    <property type="evidence" value="ECO:0007669"/>
    <property type="project" value="UniProtKB-UniRule"/>
</dbReference>
<dbReference type="GO" id="GO:0005739">
    <property type="term" value="C:mitochondrion"/>
    <property type="evidence" value="ECO:0000318"/>
    <property type="project" value="GO_Central"/>
</dbReference>
<dbReference type="GO" id="GO:0005525">
    <property type="term" value="F:GTP binding"/>
    <property type="evidence" value="ECO:0007669"/>
    <property type="project" value="UniProtKB-UniRule"/>
</dbReference>
<dbReference type="GO" id="GO:0003924">
    <property type="term" value="F:GTPase activity"/>
    <property type="evidence" value="ECO:0007669"/>
    <property type="project" value="UniProtKB-UniRule"/>
</dbReference>
<dbReference type="GO" id="GO:0097177">
    <property type="term" value="F:mitochondrial ribosome binding"/>
    <property type="evidence" value="ECO:0000318"/>
    <property type="project" value="GO_Central"/>
</dbReference>
<dbReference type="GO" id="GO:0045727">
    <property type="term" value="P:positive regulation of translation"/>
    <property type="evidence" value="ECO:0000318"/>
    <property type="project" value="GO_Central"/>
</dbReference>
<dbReference type="GO" id="GO:0006412">
    <property type="term" value="P:translation"/>
    <property type="evidence" value="ECO:0007669"/>
    <property type="project" value="UniProtKB-KW"/>
</dbReference>
<dbReference type="CDD" id="cd03699">
    <property type="entry name" value="EF4_II"/>
    <property type="match status" value="1"/>
</dbReference>
<dbReference type="CDD" id="cd16260">
    <property type="entry name" value="EF4_III"/>
    <property type="match status" value="1"/>
</dbReference>
<dbReference type="CDD" id="cd01890">
    <property type="entry name" value="LepA"/>
    <property type="match status" value="1"/>
</dbReference>
<dbReference type="CDD" id="cd03709">
    <property type="entry name" value="lepA_C"/>
    <property type="match status" value="1"/>
</dbReference>
<dbReference type="FunFam" id="3.40.50.300:FF:000078">
    <property type="entry name" value="Elongation factor 4"/>
    <property type="match status" value="1"/>
</dbReference>
<dbReference type="FunFam" id="2.40.30.10:FF:000015">
    <property type="entry name" value="Translation factor GUF1, mitochondrial"/>
    <property type="match status" value="1"/>
</dbReference>
<dbReference type="FunFam" id="3.30.70.240:FF:000007">
    <property type="entry name" value="Translation factor GUF1, mitochondrial"/>
    <property type="match status" value="1"/>
</dbReference>
<dbReference type="FunFam" id="3.30.70.2570:FF:000001">
    <property type="entry name" value="Translation factor GUF1, mitochondrial"/>
    <property type="match status" value="1"/>
</dbReference>
<dbReference type="FunFam" id="3.30.70.870:FF:000004">
    <property type="entry name" value="Translation factor GUF1, mitochondrial"/>
    <property type="match status" value="1"/>
</dbReference>
<dbReference type="Gene3D" id="3.30.70.240">
    <property type="match status" value="1"/>
</dbReference>
<dbReference type="Gene3D" id="3.30.70.2570">
    <property type="entry name" value="Elongation factor 4, C-terminal domain"/>
    <property type="match status" value="1"/>
</dbReference>
<dbReference type="Gene3D" id="3.30.70.870">
    <property type="entry name" value="Elongation Factor G (Translational Gtpase), domain 3"/>
    <property type="match status" value="1"/>
</dbReference>
<dbReference type="Gene3D" id="3.40.50.300">
    <property type="entry name" value="P-loop containing nucleotide triphosphate hydrolases"/>
    <property type="match status" value="1"/>
</dbReference>
<dbReference type="Gene3D" id="2.40.30.10">
    <property type="entry name" value="Translation factors"/>
    <property type="match status" value="1"/>
</dbReference>
<dbReference type="HAMAP" id="MF_00071">
    <property type="entry name" value="LepA"/>
    <property type="match status" value="1"/>
</dbReference>
<dbReference type="InterPro" id="IPR006297">
    <property type="entry name" value="EF-4"/>
</dbReference>
<dbReference type="InterPro" id="IPR035647">
    <property type="entry name" value="EFG_III/V"/>
</dbReference>
<dbReference type="InterPro" id="IPR000640">
    <property type="entry name" value="EFG_V-like"/>
</dbReference>
<dbReference type="InterPro" id="IPR004161">
    <property type="entry name" value="EFTu-like_2"/>
</dbReference>
<dbReference type="InterPro" id="IPR031157">
    <property type="entry name" value="G_TR_CS"/>
</dbReference>
<dbReference type="InterPro" id="IPR038363">
    <property type="entry name" value="LepA_C_sf"/>
</dbReference>
<dbReference type="InterPro" id="IPR013842">
    <property type="entry name" value="LepA_CTD"/>
</dbReference>
<dbReference type="InterPro" id="IPR035654">
    <property type="entry name" value="LepA_IV"/>
</dbReference>
<dbReference type="InterPro" id="IPR027417">
    <property type="entry name" value="P-loop_NTPase"/>
</dbReference>
<dbReference type="InterPro" id="IPR005225">
    <property type="entry name" value="Small_GTP-bd"/>
</dbReference>
<dbReference type="InterPro" id="IPR000795">
    <property type="entry name" value="T_Tr_GTP-bd_dom"/>
</dbReference>
<dbReference type="InterPro" id="IPR009000">
    <property type="entry name" value="Transl_B-barrel_sf"/>
</dbReference>
<dbReference type="NCBIfam" id="TIGR01393">
    <property type="entry name" value="lepA"/>
    <property type="match status" value="1"/>
</dbReference>
<dbReference type="NCBIfam" id="TIGR00231">
    <property type="entry name" value="small_GTP"/>
    <property type="match status" value="1"/>
</dbReference>
<dbReference type="PANTHER" id="PTHR43512:SF7">
    <property type="entry name" value="TRANSLATION FACTOR GUF1, MITOCHONDRIAL"/>
    <property type="match status" value="1"/>
</dbReference>
<dbReference type="PANTHER" id="PTHR43512">
    <property type="entry name" value="TRANSLATION FACTOR GUF1-RELATED"/>
    <property type="match status" value="1"/>
</dbReference>
<dbReference type="Pfam" id="PF00679">
    <property type="entry name" value="EFG_C"/>
    <property type="match status" value="1"/>
</dbReference>
<dbReference type="Pfam" id="PF00009">
    <property type="entry name" value="GTP_EFTU"/>
    <property type="match status" value="1"/>
</dbReference>
<dbReference type="Pfam" id="PF03144">
    <property type="entry name" value="GTP_EFTU_D2"/>
    <property type="match status" value="1"/>
</dbReference>
<dbReference type="Pfam" id="PF06421">
    <property type="entry name" value="LepA_C"/>
    <property type="match status" value="1"/>
</dbReference>
<dbReference type="PRINTS" id="PR00315">
    <property type="entry name" value="ELONGATNFCT"/>
</dbReference>
<dbReference type="SUPFAM" id="SSF54980">
    <property type="entry name" value="EF-G C-terminal domain-like"/>
    <property type="match status" value="2"/>
</dbReference>
<dbReference type="SUPFAM" id="SSF52540">
    <property type="entry name" value="P-loop containing nucleoside triphosphate hydrolases"/>
    <property type="match status" value="1"/>
</dbReference>
<dbReference type="SUPFAM" id="SSF50447">
    <property type="entry name" value="Translation proteins"/>
    <property type="match status" value="1"/>
</dbReference>
<dbReference type="PROSITE" id="PS00301">
    <property type="entry name" value="G_TR_1"/>
    <property type="match status" value="1"/>
</dbReference>
<dbReference type="PROSITE" id="PS51722">
    <property type="entry name" value="G_TR_2"/>
    <property type="match status" value="1"/>
</dbReference>
<protein>
    <recommendedName>
        <fullName evidence="1">Translation factor GUF1, mitochondrial</fullName>
        <ecNumber>3.6.5.-</ecNumber>
    </recommendedName>
    <alternativeName>
        <fullName evidence="1">Elongation factor 4 homolog</fullName>
        <shortName evidence="1">EF-4</shortName>
    </alternativeName>
    <alternativeName>
        <fullName evidence="1">GTPase GUF1</fullName>
    </alternativeName>
    <alternativeName>
        <fullName evidence="1">Ribosomal back-translocase</fullName>
    </alternativeName>
</protein>
<gene>
    <name evidence="1" type="primary">GUF1</name>
</gene>
<sequence>MWTLAGQGWWRGRALAAWVTEAARKGLLWPHLAPARGTAAESRAPDRCYSSADRKEKIDMSCFPVENTRNFSIIAHVDHGKSTLADRLLELTGAIDKTKNNKQVLDKLQVERERGITVKAQTASLFYNYEGKQYLLNLIDTPGHVDFSYEVSRSLSACQGVLLVVDANEGIQAQTVANFFLAFEAQLSIIPVINKIDLKNADPERVEKQIEKVFDIPGDECIKISAKLGTNVESVLDAVIKRIPFPKAHCRNPLRALVFDSTFDQYRGVIANVALFDGVVSKGDKIVSAHTQKTYEVNEVGVLNPNEQPTHKLYAGQVGYLIAGMKDVTEAQIGDTLYLHKQPVEPLPGFKSAKPMVFAGMYPVDQSEYNNLKSAIEKLTLNDSSVVVHRDSSLALGAGWRLGFLGLLHMEVFNQRLEQEYNASVILTTPTVPYKAVLSSAKLIKEYREKEITIINPAQFPDKSKVTEYLEPVVLGTIITPDEYTGKIMMLCQARRAVQKNMMYIDQNRVMLKYLFPLNEIVVDFYDSLKSLSSGYASFDYEDAGYQTAELVKMDILLNGSIVEELVTVVHKDKAYSVGKAICERLKDSLPRQLFEIAIQAALGSKIIARETVKAYRKNVLAKCYGGDITRKMKLLKRQAEGKKKLRKVGNVEVPKDAFIKVLKTQSDK</sequence>
<keyword id="KW-0342">GTP-binding</keyword>
<keyword id="KW-0378">Hydrolase</keyword>
<keyword id="KW-0472">Membrane</keyword>
<keyword id="KW-0496">Mitochondrion</keyword>
<keyword id="KW-0999">Mitochondrion inner membrane</keyword>
<keyword id="KW-0547">Nucleotide-binding</keyword>
<keyword id="KW-0648">Protein biosynthesis</keyword>
<keyword id="KW-1185">Reference proteome</keyword>
<keyword id="KW-0809">Transit peptide</keyword>
<reference key="1">
    <citation type="submission" date="2007-06" db="EMBL/GenBank/DDBJ databases">
        <authorList>
            <consortium name="NIH - Mammalian Gene Collection (MGC) project"/>
        </authorList>
    </citation>
    <scope>NUCLEOTIDE SEQUENCE [LARGE SCALE MRNA]</scope>
    <source>
        <strain>Hereford</strain>
        <tissue>Uterus</tissue>
    </source>
</reference>
<organism>
    <name type="scientific">Bos taurus</name>
    <name type="common">Bovine</name>
    <dbReference type="NCBI Taxonomy" id="9913"/>
    <lineage>
        <taxon>Eukaryota</taxon>
        <taxon>Metazoa</taxon>
        <taxon>Chordata</taxon>
        <taxon>Craniata</taxon>
        <taxon>Vertebrata</taxon>
        <taxon>Euteleostomi</taxon>
        <taxon>Mammalia</taxon>
        <taxon>Eutheria</taxon>
        <taxon>Laurasiatheria</taxon>
        <taxon>Artiodactyla</taxon>
        <taxon>Ruminantia</taxon>
        <taxon>Pecora</taxon>
        <taxon>Bovidae</taxon>
        <taxon>Bovinae</taxon>
        <taxon>Bos</taxon>
    </lineage>
</organism>
<name>GUF1_BOVIN</name>
<comment type="function">
    <text evidence="1">Promotes mitochondrial protein synthesis. May act as a fidelity factor of the translation reaction, by catalyzing a one-codon backward translocation of tRNAs on improperly translocated ribosomes. Binds to mitochondrial ribosomes in a GTP-dependent manner.</text>
</comment>
<comment type="catalytic activity">
    <reaction evidence="1">
        <text>GTP + H2O = GDP + phosphate + H(+)</text>
        <dbReference type="Rhea" id="RHEA:19669"/>
        <dbReference type="ChEBI" id="CHEBI:15377"/>
        <dbReference type="ChEBI" id="CHEBI:15378"/>
        <dbReference type="ChEBI" id="CHEBI:37565"/>
        <dbReference type="ChEBI" id="CHEBI:43474"/>
        <dbReference type="ChEBI" id="CHEBI:58189"/>
    </reaction>
</comment>
<comment type="subcellular location">
    <subcellularLocation>
        <location evidence="1">Mitochondrion inner membrane</location>
        <topology evidence="1">Peripheral membrane protein</topology>
        <orientation evidence="1">Matrix side</orientation>
    </subcellularLocation>
</comment>
<comment type="similarity">
    <text evidence="2">Belongs to the TRAFAC class translation factor GTPase superfamily. Classic translation factor GTPase family. LepA subfamily.</text>
</comment>
<feature type="transit peptide" description="Mitochondrion" evidence="1">
    <location>
        <begin position="1"/>
        <end position="49"/>
    </location>
</feature>
<feature type="chain" id="PRO_0000402835" description="Translation factor GUF1, mitochondrial">
    <location>
        <begin position="50"/>
        <end position="669"/>
    </location>
</feature>
<feature type="domain" description="tr-type G">
    <location>
        <begin position="66"/>
        <end position="247"/>
    </location>
</feature>
<feature type="binding site" evidence="1">
    <location>
        <begin position="75"/>
        <end position="82"/>
    </location>
    <ligand>
        <name>GTP</name>
        <dbReference type="ChEBI" id="CHEBI:37565"/>
    </ligand>
</feature>
<feature type="binding site" evidence="1">
    <location>
        <begin position="140"/>
        <end position="144"/>
    </location>
    <ligand>
        <name>GTP</name>
        <dbReference type="ChEBI" id="CHEBI:37565"/>
    </ligand>
</feature>
<feature type="binding site" evidence="1">
    <location>
        <begin position="194"/>
        <end position="197"/>
    </location>
    <ligand>
        <name>GTP</name>
        <dbReference type="ChEBI" id="CHEBI:37565"/>
    </ligand>
</feature>
<proteinExistence type="evidence at transcript level"/>
<evidence type="ECO:0000255" key="1">
    <source>
        <dbReference type="HAMAP-Rule" id="MF_03137"/>
    </source>
</evidence>
<evidence type="ECO:0000305" key="2"/>